<name>RL1_BURM7</name>
<comment type="function">
    <text evidence="1">Binds directly to 23S rRNA. The L1 stalk is quite mobile in the ribosome, and is involved in E site tRNA release.</text>
</comment>
<comment type="function">
    <text evidence="1">Protein L1 is also a translational repressor protein, it controls the translation of the L11 operon by binding to its mRNA.</text>
</comment>
<comment type="subunit">
    <text evidence="1">Part of the 50S ribosomal subunit.</text>
</comment>
<comment type="similarity">
    <text evidence="1">Belongs to the universal ribosomal protein uL1 family.</text>
</comment>
<feature type="chain" id="PRO_0000307975" description="Large ribosomal subunit protein uL1">
    <location>
        <begin position="1"/>
        <end position="232"/>
    </location>
</feature>
<evidence type="ECO:0000255" key="1">
    <source>
        <dbReference type="HAMAP-Rule" id="MF_01318"/>
    </source>
</evidence>
<evidence type="ECO:0000305" key="2"/>
<sequence length="232" mass="24321">MAKISKRRQAFAAKVDRQKLYPIDDALALVKECASAKFDESIDVAVQLGIDAKKSDQVVRGSVVLPAGTGKSVRVAVFAQGEKAEQARAAGAEVVGMEDLAEQIKAGQMDFDIVIASPDTMRIVGTLGQILGPRGLMPNPKVGTVTPDVATAVKNAKAGQVQFRVDKAGIIHATIGRASFEPTALRTNLSALIEALQKAKPATSKGVYLRKIALSSTMGVGVRVDQGSLAAQ</sequence>
<accession>A3MRU2</accession>
<gene>
    <name evidence="1" type="primary">rplA</name>
    <name type="ordered locus">BMA10247_3466</name>
</gene>
<protein>
    <recommendedName>
        <fullName evidence="1">Large ribosomal subunit protein uL1</fullName>
    </recommendedName>
    <alternativeName>
        <fullName evidence="2">50S ribosomal protein L1</fullName>
    </alternativeName>
</protein>
<proteinExistence type="inferred from homology"/>
<dbReference type="EMBL" id="CP000548">
    <property type="protein sequence ID" value="ABO06470.1"/>
    <property type="molecule type" value="Genomic_DNA"/>
</dbReference>
<dbReference type="RefSeq" id="WP_004185135.1">
    <property type="nucleotide sequence ID" value="NZ_CP007802.1"/>
</dbReference>
<dbReference type="SMR" id="A3MRU2"/>
<dbReference type="GeneID" id="93061844"/>
<dbReference type="KEGG" id="bmaz:BM44_3053"/>
<dbReference type="KEGG" id="bmn:BMA10247_3466"/>
<dbReference type="PATRIC" id="fig|320389.8.peg.3425"/>
<dbReference type="GO" id="GO:0022625">
    <property type="term" value="C:cytosolic large ribosomal subunit"/>
    <property type="evidence" value="ECO:0007669"/>
    <property type="project" value="TreeGrafter"/>
</dbReference>
<dbReference type="GO" id="GO:0019843">
    <property type="term" value="F:rRNA binding"/>
    <property type="evidence" value="ECO:0007669"/>
    <property type="project" value="UniProtKB-UniRule"/>
</dbReference>
<dbReference type="GO" id="GO:0003735">
    <property type="term" value="F:structural constituent of ribosome"/>
    <property type="evidence" value="ECO:0007669"/>
    <property type="project" value="InterPro"/>
</dbReference>
<dbReference type="GO" id="GO:0000049">
    <property type="term" value="F:tRNA binding"/>
    <property type="evidence" value="ECO:0007669"/>
    <property type="project" value="UniProtKB-KW"/>
</dbReference>
<dbReference type="GO" id="GO:0006417">
    <property type="term" value="P:regulation of translation"/>
    <property type="evidence" value="ECO:0007669"/>
    <property type="project" value="UniProtKB-KW"/>
</dbReference>
<dbReference type="GO" id="GO:0006412">
    <property type="term" value="P:translation"/>
    <property type="evidence" value="ECO:0007669"/>
    <property type="project" value="UniProtKB-UniRule"/>
</dbReference>
<dbReference type="CDD" id="cd00403">
    <property type="entry name" value="Ribosomal_L1"/>
    <property type="match status" value="1"/>
</dbReference>
<dbReference type="FunFam" id="3.40.50.790:FF:000001">
    <property type="entry name" value="50S ribosomal protein L1"/>
    <property type="match status" value="1"/>
</dbReference>
<dbReference type="Gene3D" id="3.30.190.20">
    <property type="match status" value="1"/>
</dbReference>
<dbReference type="Gene3D" id="3.40.50.790">
    <property type="match status" value="1"/>
</dbReference>
<dbReference type="HAMAP" id="MF_01318_B">
    <property type="entry name" value="Ribosomal_uL1_B"/>
    <property type="match status" value="1"/>
</dbReference>
<dbReference type="InterPro" id="IPR005878">
    <property type="entry name" value="Ribosom_uL1_bac-type"/>
</dbReference>
<dbReference type="InterPro" id="IPR002143">
    <property type="entry name" value="Ribosomal_uL1"/>
</dbReference>
<dbReference type="InterPro" id="IPR023674">
    <property type="entry name" value="Ribosomal_uL1-like"/>
</dbReference>
<dbReference type="InterPro" id="IPR028364">
    <property type="entry name" value="Ribosomal_uL1/biogenesis"/>
</dbReference>
<dbReference type="InterPro" id="IPR016095">
    <property type="entry name" value="Ribosomal_uL1_3-a/b-sand"/>
</dbReference>
<dbReference type="InterPro" id="IPR023673">
    <property type="entry name" value="Ribosomal_uL1_CS"/>
</dbReference>
<dbReference type="NCBIfam" id="TIGR01169">
    <property type="entry name" value="rplA_bact"/>
    <property type="match status" value="1"/>
</dbReference>
<dbReference type="PANTHER" id="PTHR36427">
    <property type="entry name" value="54S RIBOSOMAL PROTEIN L1, MITOCHONDRIAL"/>
    <property type="match status" value="1"/>
</dbReference>
<dbReference type="PANTHER" id="PTHR36427:SF3">
    <property type="entry name" value="LARGE RIBOSOMAL SUBUNIT PROTEIN UL1M"/>
    <property type="match status" value="1"/>
</dbReference>
<dbReference type="Pfam" id="PF00687">
    <property type="entry name" value="Ribosomal_L1"/>
    <property type="match status" value="1"/>
</dbReference>
<dbReference type="PIRSF" id="PIRSF002155">
    <property type="entry name" value="Ribosomal_L1"/>
    <property type="match status" value="1"/>
</dbReference>
<dbReference type="SUPFAM" id="SSF56808">
    <property type="entry name" value="Ribosomal protein L1"/>
    <property type="match status" value="1"/>
</dbReference>
<dbReference type="PROSITE" id="PS01199">
    <property type="entry name" value="RIBOSOMAL_L1"/>
    <property type="match status" value="1"/>
</dbReference>
<organism>
    <name type="scientific">Burkholderia mallei (strain NCTC 10247)</name>
    <dbReference type="NCBI Taxonomy" id="320389"/>
    <lineage>
        <taxon>Bacteria</taxon>
        <taxon>Pseudomonadati</taxon>
        <taxon>Pseudomonadota</taxon>
        <taxon>Betaproteobacteria</taxon>
        <taxon>Burkholderiales</taxon>
        <taxon>Burkholderiaceae</taxon>
        <taxon>Burkholderia</taxon>
        <taxon>pseudomallei group</taxon>
    </lineage>
</organism>
<keyword id="KW-0678">Repressor</keyword>
<keyword id="KW-0687">Ribonucleoprotein</keyword>
<keyword id="KW-0689">Ribosomal protein</keyword>
<keyword id="KW-0694">RNA-binding</keyword>
<keyword id="KW-0699">rRNA-binding</keyword>
<keyword id="KW-0810">Translation regulation</keyword>
<keyword id="KW-0820">tRNA-binding</keyword>
<reference key="1">
    <citation type="journal article" date="2010" name="Genome Biol. Evol.">
        <title>Continuing evolution of Burkholderia mallei through genome reduction and large-scale rearrangements.</title>
        <authorList>
            <person name="Losada L."/>
            <person name="Ronning C.M."/>
            <person name="DeShazer D."/>
            <person name="Woods D."/>
            <person name="Fedorova N."/>
            <person name="Kim H.S."/>
            <person name="Shabalina S.A."/>
            <person name="Pearson T.R."/>
            <person name="Brinkac L."/>
            <person name="Tan P."/>
            <person name="Nandi T."/>
            <person name="Crabtree J."/>
            <person name="Badger J."/>
            <person name="Beckstrom-Sternberg S."/>
            <person name="Saqib M."/>
            <person name="Schutzer S.E."/>
            <person name="Keim P."/>
            <person name="Nierman W.C."/>
        </authorList>
    </citation>
    <scope>NUCLEOTIDE SEQUENCE [LARGE SCALE GENOMIC DNA]</scope>
    <source>
        <strain>NCTC 10247</strain>
    </source>
</reference>